<keyword id="KW-1185">Reference proteome</keyword>
<keyword id="KW-0687">Ribonucleoprotein</keyword>
<keyword id="KW-0689">Ribosomal protein</keyword>
<keyword id="KW-0694">RNA-binding</keyword>
<keyword id="KW-0699">rRNA-binding</keyword>
<organism>
    <name type="scientific">Ureaplasma parvum serovar 3 (strain ATCC 700970)</name>
    <dbReference type="NCBI Taxonomy" id="273119"/>
    <lineage>
        <taxon>Bacteria</taxon>
        <taxon>Bacillati</taxon>
        <taxon>Mycoplasmatota</taxon>
        <taxon>Mycoplasmoidales</taxon>
        <taxon>Mycoplasmoidaceae</taxon>
        <taxon>Ureaplasma</taxon>
    </lineage>
</organism>
<comment type="function">
    <text evidence="1">One of the primary rRNA binding proteins. Required for association of the 30S and 50S subunits to form the 70S ribosome, for tRNA binding and peptide bond formation. It has been suggested to have peptidyltransferase activity; this is somewhat controversial. Makes several contacts with the 16S rRNA in the 70S ribosome.</text>
</comment>
<comment type="subunit">
    <text evidence="1">Part of the 50S ribosomal subunit. Forms a bridge to the 30S subunit in the 70S ribosome.</text>
</comment>
<comment type="similarity">
    <text evidence="1">Belongs to the universal ribosomal protein uL2 family.</text>
</comment>
<accession>Q9PQQ7</accession>
<feature type="chain" id="PRO_0000129646" description="Large ribosomal subunit protein uL2">
    <location>
        <begin position="1"/>
        <end position="279"/>
    </location>
</feature>
<feature type="region of interest" description="Disordered" evidence="2">
    <location>
        <begin position="223"/>
        <end position="279"/>
    </location>
</feature>
<feature type="compositionally biased region" description="Basic residues" evidence="2">
    <location>
        <begin position="254"/>
        <end position="267"/>
    </location>
</feature>
<evidence type="ECO:0000255" key="1">
    <source>
        <dbReference type="HAMAP-Rule" id="MF_01320"/>
    </source>
</evidence>
<evidence type="ECO:0000256" key="2">
    <source>
        <dbReference type="SAM" id="MobiDB-lite"/>
    </source>
</evidence>
<evidence type="ECO:0000305" key="3"/>
<dbReference type="EMBL" id="AF222894">
    <property type="protein sequence ID" value="AAF30643.1"/>
    <property type="molecule type" value="Genomic_DNA"/>
</dbReference>
<dbReference type="RefSeq" id="WP_004025838.1">
    <property type="nucleotide sequence ID" value="NC_002162.1"/>
</dbReference>
<dbReference type="SMR" id="Q9PQQ7"/>
<dbReference type="STRING" id="273119.UU234"/>
<dbReference type="EnsemblBacteria" id="AAF30643">
    <property type="protein sequence ID" value="AAF30643"/>
    <property type="gene ID" value="UU234"/>
</dbReference>
<dbReference type="GeneID" id="93848709"/>
<dbReference type="KEGG" id="uur:UU234"/>
<dbReference type="eggNOG" id="COG0090">
    <property type="taxonomic scope" value="Bacteria"/>
</dbReference>
<dbReference type="HOGENOM" id="CLU_036235_2_1_14"/>
<dbReference type="OrthoDB" id="9778722at2"/>
<dbReference type="Proteomes" id="UP000000423">
    <property type="component" value="Chromosome"/>
</dbReference>
<dbReference type="GO" id="GO:0015934">
    <property type="term" value="C:large ribosomal subunit"/>
    <property type="evidence" value="ECO:0007669"/>
    <property type="project" value="InterPro"/>
</dbReference>
<dbReference type="GO" id="GO:0019843">
    <property type="term" value="F:rRNA binding"/>
    <property type="evidence" value="ECO:0007669"/>
    <property type="project" value="UniProtKB-UniRule"/>
</dbReference>
<dbReference type="GO" id="GO:0003735">
    <property type="term" value="F:structural constituent of ribosome"/>
    <property type="evidence" value="ECO:0007669"/>
    <property type="project" value="InterPro"/>
</dbReference>
<dbReference type="GO" id="GO:0016740">
    <property type="term" value="F:transferase activity"/>
    <property type="evidence" value="ECO:0007669"/>
    <property type="project" value="InterPro"/>
</dbReference>
<dbReference type="GO" id="GO:0002181">
    <property type="term" value="P:cytoplasmic translation"/>
    <property type="evidence" value="ECO:0007669"/>
    <property type="project" value="TreeGrafter"/>
</dbReference>
<dbReference type="FunFam" id="2.30.30.30:FF:000001">
    <property type="entry name" value="50S ribosomal protein L2"/>
    <property type="match status" value="1"/>
</dbReference>
<dbReference type="FunFam" id="2.40.50.140:FF:000003">
    <property type="entry name" value="50S ribosomal protein L2"/>
    <property type="match status" value="1"/>
</dbReference>
<dbReference type="FunFam" id="4.10.950.10:FF:000001">
    <property type="entry name" value="50S ribosomal protein L2"/>
    <property type="match status" value="1"/>
</dbReference>
<dbReference type="Gene3D" id="2.30.30.30">
    <property type="match status" value="1"/>
</dbReference>
<dbReference type="Gene3D" id="2.40.50.140">
    <property type="entry name" value="Nucleic acid-binding proteins"/>
    <property type="match status" value="1"/>
</dbReference>
<dbReference type="Gene3D" id="4.10.950.10">
    <property type="entry name" value="Ribosomal protein L2, domain 3"/>
    <property type="match status" value="1"/>
</dbReference>
<dbReference type="HAMAP" id="MF_01320_B">
    <property type="entry name" value="Ribosomal_uL2_B"/>
    <property type="match status" value="1"/>
</dbReference>
<dbReference type="InterPro" id="IPR012340">
    <property type="entry name" value="NA-bd_OB-fold"/>
</dbReference>
<dbReference type="InterPro" id="IPR014722">
    <property type="entry name" value="Rib_uL2_dom2"/>
</dbReference>
<dbReference type="InterPro" id="IPR002171">
    <property type="entry name" value="Ribosomal_uL2"/>
</dbReference>
<dbReference type="InterPro" id="IPR005880">
    <property type="entry name" value="Ribosomal_uL2_bac/org-type"/>
</dbReference>
<dbReference type="InterPro" id="IPR022669">
    <property type="entry name" value="Ribosomal_uL2_C"/>
</dbReference>
<dbReference type="InterPro" id="IPR022671">
    <property type="entry name" value="Ribosomal_uL2_CS"/>
</dbReference>
<dbReference type="InterPro" id="IPR014726">
    <property type="entry name" value="Ribosomal_uL2_dom3"/>
</dbReference>
<dbReference type="InterPro" id="IPR022666">
    <property type="entry name" value="Ribosomal_uL2_RNA-bd_dom"/>
</dbReference>
<dbReference type="InterPro" id="IPR008991">
    <property type="entry name" value="Translation_prot_SH3-like_sf"/>
</dbReference>
<dbReference type="NCBIfam" id="TIGR01171">
    <property type="entry name" value="rplB_bact"/>
    <property type="match status" value="1"/>
</dbReference>
<dbReference type="PANTHER" id="PTHR13691:SF5">
    <property type="entry name" value="LARGE RIBOSOMAL SUBUNIT PROTEIN UL2M"/>
    <property type="match status" value="1"/>
</dbReference>
<dbReference type="PANTHER" id="PTHR13691">
    <property type="entry name" value="RIBOSOMAL PROTEIN L2"/>
    <property type="match status" value="1"/>
</dbReference>
<dbReference type="Pfam" id="PF00181">
    <property type="entry name" value="Ribosomal_L2"/>
    <property type="match status" value="1"/>
</dbReference>
<dbReference type="Pfam" id="PF03947">
    <property type="entry name" value="Ribosomal_L2_C"/>
    <property type="match status" value="1"/>
</dbReference>
<dbReference type="PIRSF" id="PIRSF002158">
    <property type="entry name" value="Ribosomal_L2"/>
    <property type="match status" value="1"/>
</dbReference>
<dbReference type="SMART" id="SM01383">
    <property type="entry name" value="Ribosomal_L2"/>
    <property type="match status" value="1"/>
</dbReference>
<dbReference type="SMART" id="SM01382">
    <property type="entry name" value="Ribosomal_L2_C"/>
    <property type="match status" value="1"/>
</dbReference>
<dbReference type="SUPFAM" id="SSF50249">
    <property type="entry name" value="Nucleic acid-binding proteins"/>
    <property type="match status" value="1"/>
</dbReference>
<dbReference type="SUPFAM" id="SSF50104">
    <property type="entry name" value="Translation proteins SH3-like domain"/>
    <property type="match status" value="1"/>
</dbReference>
<dbReference type="PROSITE" id="PS00467">
    <property type="entry name" value="RIBOSOMAL_L2"/>
    <property type="match status" value="1"/>
</dbReference>
<protein>
    <recommendedName>
        <fullName evidence="1">Large ribosomal subunit protein uL2</fullName>
    </recommendedName>
    <alternativeName>
        <fullName evidence="3">50S ribosomal protein L2</fullName>
    </alternativeName>
</protein>
<reference key="1">
    <citation type="journal article" date="2000" name="Nature">
        <title>The complete sequence of the mucosal pathogen Ureaplasma urealyticum.</title>
        <authorList>
            <person name="Glass J.I."/>
            <person name="Lefkowitz E.J."/>
            <person name="Glass J.S."/>
            <person name="Heiner C.R."/>
            <person name="Chen E.Y."/>
            <person name="Cassell G.H."/>
        </authorList>
    </citation>
    <scope>NUCLEOTIDE SEQUENCE [LARGE SCALE GENOMIC DNA]</scope>
    <source>
        <strain>ATCC 700970</strain>
    </source>
</reference>
<gene>
    <name evidence="1" type="primary">rplB</name>
    <name evidence="1" type="synonym">rpl2</name>
    <name type="ordered locus">UU234</name>
</gene>
<name>RL2_UREPA</name>
<proteinExistence type="inferred from homology"/>
<sequence length="279" mass="30873">MAVKRIKNHSSGKRQTVVVDYKSILTTSKPEKSLLVTLPKKAGRNNQGKITIRHHGGGHKRKYRIIDFKRNKDNIYGTIKSIEYDPNRTSFISLVVYADGEKRYIIAPKGIKVGDKIISGNENIDILLGNSLPLEFIPEGTLVHNIELSPNAGGQITRSAGASAQILGFDETKKYILVKLNSGEVRKFRKECRATIGTVSNDEHILENLGKAGKSRHLGVRPTVRGSAMNPNDHPHGGGEGRSPVGMDAPRTPWGKRHMGVKTRNNKKSSTSMIVRRRK</sequence>